<feature type="chain" id="PRO_1000100998" description="Large ribosomal subunit protein bL36">
    <location>
        <begin position="1"/>
        <end position="38"/>
    </location>
</feature>
<accession>B4UBC2</accession>
<gene>
    <name evidence="1" type="primary">rpmJ</name>
    <name type="ordered locus">AnaeK_1956</name>
</gene>
<sequence length="38" mass="4375">MKVRASVKKICDKCKVIKRKGTVRIICPANPRHKQRQG</sequence>
<proteinExistence type="inferred from homology"/>
<comment type="similarity">
    <text evidence="1">Belongs to the bacterial ribosomal protein bL36 family.</text>
</comment>
<protein>
    <recommendedName>
        <fullName evidence="1">Large ribosomal subunit protein bL36</fullName>
    </recommendedName>
    <alternativeName>
        <fullName evidence="2">50S ribosomal protein L36</fullName>
    </alternativeName>
</protein>
<organism>
    <name type="scientific">Anaeromyxobacter sp. (strain K)</name>
    <dbReference type="NCBI Taxonomy" id="447217"/>
    <lineage>
        <taxon>Bacteria</taxon>
        <taxon>Pseudomonadati</taxon>
        <taxon>Myxococcota</taxon>
        <taxon>Myxococcia</taxon>
        <taxon>Myxococcales</taxon>
        <taxon>Cystobacterineae</taxon>
        <taxon>Anaeromyxobacteraceae</taxon>
        <taxon>Anaeromyxobacter</taxon>
    </lineage>
</organism>
<name>RL36_ANASK</name>
<reference key="1">
    <citation type="submission" date="2008-08" db="EMBL/GenBank/DDBJ databases">
        <title>Complete sequence of Anaeromyxobacter sp. K.</title>
        <authorList>
            <consortium name="US DOE Joint Genome Institute"/>
            <person name="Lucas S."/>
            <person name="Copeland A."/>
            <person name="Lapidus A."/>
            <person name="Glavina del Rio T."/>
            <person name="Dalin E."/>
            <person name="Tice H."/>
            <person name="Bruce D."/>
            <person name="Goodwin L."/>
            <person name="Pitluck S."/>
            <person name="Saunders E."/>
            <person name="Brettin T."/>
            <person name="Detter J.C."/>
            <person name="Han C."/>
            <person name="Larimer F."/>
            <person name="Land M."/>
            <person name="Hauser L."/>
            <person name="Kyrpides N."/>
            <person name="Ovchinnikiva G."/>
            <person name="Beliaev A."/>
        </authorList>
    </citation>
    <scope>NUCLEOTIDE SEQUENCE [LARGE SCALE GENOMIC DNA]</scope>
    <source>
        <strain>K</strain>
    </source>
</reference>
<dbReference type="EMBL" id="CP001131">
    <property type="protein sequence ID" value="ACG73184.1"/>
    <property type="molecule type" value="Genomic_DNA"/>
</dbReference>
<dbReference type="RefSeq" id="WP_011420977.1">
    <property type="nucleotide sequence ID" value="NC_011145.1"/>
</dbReference>
<dbReference type="SMR" id="B4UBC2"/>
<dbReference type="KEGG" id="ank:AnaeK_1956"/>
<dbReference type="HOGENOM" id="CLU_135723_6_2_7"/>
<dbReference type="Proteomes" id="UP000001871">
    <property type="component" value="Chromosome"/>
</dbReference>
<dbReference type="GO" id="GO:0005737">
    <property type="term" value="C:cytoplasm"/>
    <property type="evidence" value="ECO:0007669"/>
    <property type="project" value="UniProtKB-ARBA"/>
</dbReference>
<dbReference type="GO" id="GO:1990904">
    <property type="term" value="C:ribonucleoprotein complex"/>
    <property type="evidence" value="ECO:0007669"/>
    <property type="project" value="UniProtKB-KW"/>
</dbReference>
<dbReference type="GO" id="GO:0005840">
    <property type="term" value="C:ribosome"/>
    <property type="evidence" value="ECO:0007669"/>
    <property type="project" value="UniProtKB-KW"/>
</dbReference>
<dbReference type="GO" id="GO:0003735">
    <property type="term" value="F:structural constituent of ribosome"/>
    <property type="evidence" value="ECO:0007669"/>
    <property type="project" value="InterPro"/>
</dbReference>
<dbReference type="GO" id="GO:0006412">
    <property type="term" value="P:translation"/>
    <property type="evidence" value="ECO:0007669"/>
    <property type="project" value="UniProtKB-UniRule"/>
</dbReference>
<dbReference type="HAMAP" id="MF_00251">
    <property type="entry name" value="Ribosomal_bL36"/>
    <property type="match status" value="1"/>
</dbReference>
<dbReference type="InterPro" id="IPR000473">
    <property type="entry name" value="Ribosomal_bL36"/>
</dbReference>
<dbReference type="InterPro" id="IPR035977">
    <property type="entry name" value="Ribosomal_bL36_sp"/>
</dbReference>
<dbReference type="NCBIfam" id="TIGR01022">
    <property type="entry name" value="rpmJ_bact"/>
    <property type="match status" value="1"/>
</dbReference>
<dbReference type="PANTHER" id="PTHR42888">
    <property type="entry name" value="50S RIBOSOMAL PROTEIN L36, CHLOROPLASTIC"/>
    <property type="match status" value="1"/>
</dbReference>
<dbReference type="PANTHER" id="PTHR42888:SF1">
    <property type="entry name" value="LARGE RIBOSOMAL SUBUNIT PROTEIN BL36C"/>
    <property type="match status" value="1"/>
</dbReference>
<dbReference type="Pfam" id="PF00444">
    <property type="entry name" value="Ribosomal_L36"/>
    <property type="match status" value="1"/>
</dbReference>
<dbReference type="SUPFAM" id="SSF57840">
    <property type="entry name" value="Ribosomal protein L36"/>
    <property type="match status" value="1"/>
</dbReference>
<dbReference type="PROSITE" id="PS00828">
    <property type="entry name" value="RIBOSOMAL_L36"/>
    <property type="match status" value="1"/>
</dbReference>
<keyword id="KW-0687">Ribonucleoprotein</keyword>
<keyword id="KW-0689">Ribosomal protein</keyword>
<evidence type="ECO:0000255" key="1">
    <source>
        <dbReference type="HAMAP-Rule" id="MF_00251"/>
    </source>
</evidence>
<evidence type="ECO:0000305" key="2"/>